<comment type="function">
    <text evidence="5">May be involved in regulation of tRNA subcellular distribution.</text>
</comment>
<comment type="subcellular location">
    <subcellularLocation>
        <location evidence="3 5">Cytoplasm</location>
    </subcellularLocation>
</comment>
<comment type="miscellaneous">
    <text evidence="4">Present with 1160 molecules/cell in log phase SD medium.</text>
</comment>
<comment type="similarity">
    <text evidence="6">Belongs to the glucosamine/galactosamine-6-phosphate isomerase family. 6-phosphogluconolactonase subfamily.</text>
</comment>
<comment type="caution">
    <text evidence="6">Lacks 6-phosphogluconolactonase activity.</text>
</comment>
<gene>
    <name type="primary">SOL2</name>
    <name type="ordered locus">YCR073W-A</name>
    <name type="ORF">YCRX13W</name>
</gene>
<reference key="1">
    <citation type="journal article" date="1996" name="Genetics">
        <title>Los1p, involved in yeast pre-tRNA splicing, positively regulates members of the SOL gene family.</title>
        <authorList>
            <person name="Shen W.-C."/>
            <person name="Stanford D.R."/>
            <person name="Hopper A.K."/>
        </authorList>
    </citation>
    <scope>NUCLEOTIDE SEQUENCE [GENOMIC DNA]</scope>
</reference>
<reference key="2">
    <citation type="journal article" date="1992" name="Nature">
        <title>The complete DNA sequence of yeast chromosome III.</title>
        <authorList>
            <person name="Oliver S.G."/>
            <person name="van der Aart Q.J.M."/>
            <person name="Agostoni-Carbone M.L."/>
            <person name="Aigle M."/>
            <person name="Alberghina L."/>
            <person name="Alexandraki D."/>
            <person name="Antoine G."/>
            <person name="Anwar R."/>
            <person name="Ballesta J.P.G."/>
            <person name="Benit P."/>
            <person name="Berben G."/>
            <person name="Bergantino E."/>
            <person name="Biteau N."/>
            <person name="Bolle P.-A."/>
            <person name="Bolotin-Fukuhara M."/>
            <person name="Brown A."/>
            <person name="Brown A.J.P."/>
            <person name="Buhler J.-M."/>
            <person name="Carcano C."/>
            <person name="Carignani G."/>
            <person name="Cederberg H."/>
            <person name="Chanet R."/>
            <person name="Contreras R."/>
            <person name="Crouzet M."/>
            <person name="Daignan-Fornier B."/>
            <person name="Defoor E."/>
            <person name="Delgado M.D."/>
            <person name="Demolder J."/>
            <person name="Doira C."/>
            <person name="Dubois E."/>
            <person name="Dujon B."/>
            <person name="Duesterhoeft A."/>
            <person name="Erdmann D."/>
            <person name="Esteban M."/>
            <person name="Fabre F."/>
            <person name="Fairhead C."/>
            <person name="Faye G."/>
            <person name="Feldmann H."/>
            <person name="Fiers W."/>
            <person name="Francingues-Gaillard M.-C."/>
            <person name="Franco L."/>
            <person name="Frontali L."/>
            <person name="Fukuhara H."/>
            <person name="Fuller L.J."/>
            <person name="Galland P."/>
            <person name="Gent M.E."/>
            <person name="Gigot D."/>
            <person name="Gilliquet V."/>
            <person name="Glansdorff N."/>
            <person name="Goffeau A."/>
            <person name="Grenson M."/>
            <person name="Grisanti P."/>
            <person name="Grivell L.A."/>
            <person name="de Haan M."/>
            <person name="Haasemann M."/>
            <person name="Hatat D."/>
            <person name="Hoenicka J."/>
            <person name="Hegemann J.H."/>
            <person name="Herbert C.J."/>
            <person name="Hilger F."/>
            <person name="Hohmann S."/>
            <person name="Hollenberg C.P."/>
            <person name="Huse K."/>
            <person name="Iborra F."/>
            <person name="Indge K.J."/>
            <person name="Isono K."/>
            <person name="Jacq C."/>
            <person name="Jacquet M."/>
            <person name="James C.M."/>
            <person name="Jauniaux J.-C."/>
            <person name="Jia Y."/>
            <person name="Jimenez A."/>
            <person name="Kelly A."/>
            <person name="Kleinhans U."/>
            <person name="Kreisl P."/>
            <person name="Lanfranchi G."/>
            <person name="Lewis C."/>
            <person name="van der Linden C.G."/>
            <person name="Lucchini G."/>
            <person name="Lutzenkirchen K."/>
            <person name="Maat M.J."/>
            <person name="Mallet L."/>
            <person name="Mannhaupt G."/>
            <person name="Martegani E."/>
            <person name="Mathieu A."/>
            <person name="Maurer C.T.C."/>
            <person name="McConnell D."/>
            <person name="McKee R.A."/>
            <person name="Messenguy F."/>
            <person name="Mewes H.-W."/>
            <person name="Molemans F."/>
            <person name="Montague M.A."/>
            <person name="Muzi Falconi M."/>
            <person name="Navas L."/>
            <person name="Newlon C.S."/>
            <person name="Noone D."/>
            <person name="Pallier C."/>
            <person name="Panzeri L."/>
            <person name="Pearson B.M."/>
            <person name="Perea J."/>
            <person name="Philippsen P."/>
            <person name="Pierard A."/>
            <person name="Planta R.J."/>
            <person name="Plevani P."/>
            <person name="Poetsch B."/>
            <person name="Pohl F.M."/>
            <person name="Purnelle B."/>
            <person name="Ramezani Rad M."/>
            <person name="Rasmussen S.W."/>
            <person name="Raynal A."/>
            <person name="Remacha M.A."/>
            <person name="Richterich P."/>
            <person name="Roberts A.B."/>
            <person name="Rodriguez F."/>
            <person name="Sanz E."/>
            <person name="Schaaff-Gerstenschlaeger I."/>
            <person name="Scherens B."/>
            <person name="Schweitzer B."/>
            <person name="Shu Y."/>
            <person name="Skala J."/>
            <person name="Slonimski P.P."/>
            <person name="Sor F."/>
            <person name="Soustelle C."/>
            <person name="Spiegelberg R."/>
            <person name="Stateva L.I."/>
            <person name="Steensma H.Y."/>
            <person name="Steiner S."/>
            <person name="Thierry A."/>
            <person name="Thireos G."/>
            <person name="Tzermia M."/>
            <person name="Urrestarazu L.A."/>
            <person name="Valle G."/>
            <person name="Vetter I."/>
            <person name="van Vliet-Reedijk J.C."/>
            <person name="Voet M."/>
            <person name="Volckaert G."/>
            <person name="Vreken P."/>
            <person name="Wang H."/>
            <person name="Warmington J.R."/>
            <person name="von Wettstein D."/>
            <person name="Wicksteed B.L."/>
            <person name="Wilson C."/>
            <person name="Wurst H."/>
            <person name="Xu G."/>
            <person name="Yoshikawa A."/>
            <person name="Zimmermann F.K."/>
            <person name="Sgouros J.G."/>
        </authorList>
    </citation>
    <scope>NUCLEOTIDE SEQUENCE [LARGE SCALE GENOMIC DNA]</scope>
    <source>
        <strain>ATCC 204508 / S288c</strain>
    </source>
</reference>
<reference key="3">
    <citation type="submission" date="2001-06" db="EMBL/GenBank/DDBJ databases">
        <authorList>
            <person name="Valles G."/>
            <person name="Volckaerts G."/>
        </authorList>
    </citation>
    <scope>SEQUENCE REVISION TO 171</scope>
</reference>
<reference key="4">
    <citation type="journal article" date="2014" name="G3 (Bethesda)">
        <title>The reference genome sequence of Saccharomyces cerevisiae: Then and now.</title>
        <authorList>
            <person name="Engel S.R."/>
            <person name="Dietrich F.S."/>
            <person name="Fisk D.G."/>
            <person name="Binkley G."/>
            <person name="Balakrishnan R."/>
            <person name="Costanzo M.C."/>
            <person name="Dwight S.S."/>
            <person name="Hitz B.C."/>
            <person name="Karra K."/>
            <person name="Nash R.S."/>
            <person name="Weng S."/>
            <person name="Wong E.D."/>
            <person name="Lloyd P."/>
            <person name="Skrzypek M.S."/>
            <person name="Miyasato S.R."/>
            <person name="Simison M."/>
            <person name="Cherry J.M."/>
        </authorList>
    </citation>
    <scope>GENOME REANNOTATION</scope>
    <source>
        <strain>ATCC 204508 / S288c</strain>
    </source>
</reference>
<reference key="5">
    <citation type="journal article" date="1994" name="EMBO J.">
        <title>Yeast chromosome III: new gene functions.</title>
        <authorList>
            <person name="Koonin E.V."/>
            <person name="Bork P."/>
            <person name="Sander C."/>
        </authorList>
    </citation>
    <scope>IDENTIFICATION</scope>
    <scope>SIMILARITY</scope>
</reference>
<reference key="6">
    <citation type="journal article" date="2003" name="Nature">
        <title>Global analysis of protein localization in budding yeast.</title>
        <authorList>
            <person name="Huh W.-K."/>
            <person name="Falvo J.V."/>
            <person name="Gerke L.C."/>
            <person name="Carroll A.S."/>
            <person name="Howson R.W."/>
            <person name="Weissman J.S."/>
            <person name="O'Shea E.K."/>
        </authorList>
    </citation>
    <scope>SUBCELLULAR LOCATION [LARGE SCALE ANALYSIS]</scope>
</reference>
<reference key="7">
    <citation type="journal article" date="2003" name="Nature">
        <title>Global analysis of protein expression in yeast.</title>
        <authorList>
            <person name="Ghaemmaghami S."/>
            <person name="Huh W.-K."/>
            <person name="Bower K."/>
            <person name="Howson R.W."/>
            <person name="Belle A."/>
            <person name="Dephoure N."/>
            <person name="O'Shea E.K."/>
            <person name="Weissman J.S."/>
        </authorList>
    </citation>
    <scope>LEVEL OF PROTEIN EXPRESSION [LARGE SCALE ANALYSIS]</scope>
</reference>
<reference key="8">
    <citation type="journal article" date="2004" name="Genetics">
        <title>Division of labor among the yeast Sol proteins implicated in tRNA nuclear export and carbohydrate metabolism.</title>
        <authorList>
            <person name="Stanford D.R."/>
            <person name="Whitney M.L."/>
            <person name="Hurto R.L."/>
            <person name="Eisaman D.M."/>
            <person name="Shen W.-C."/>
            <person name="Hopper A.K."/>
        </authorList>
    </citation>
    <scope>FUNCTION</scope>
    <scope>LACK OF ENZYME ACTIVITY</scope>
    <scope>SUBCELLULAR LOCATION</scope>
</reference>
<reference key="9">
    <citation type="journal article" date="2007" name="J. Proteome Res.">
        <title>Large-scale phosphorylation analysis of alpha-factor-arrested Saccharomyces cerevisiae.</title>
        <authorList>
            <person name="Li X."/>
            <person name="Gerber S.A."/>
            <person name="Rudner A.D."/>
            <person name="Beausoleil S.A."/>
            <person name="Haas W."/>
            <person name="Villen J."/>
            <person name="Elias J.E."/>
            <person name="Gygi S.P."/>
        </authorList>
    </citation>
    <scope>PHOSPHORYLATION [LARGE SCALE ANALYSIS] AT SER-42</scope>
    <scope>IDENTIFICATION BY MASS SPECTROMETRY [LARGE SCALE ANALYSIS]</scope>
    <source>
        <strain>ADR376</strain>
    </source>
</reference>
<reference key="10">
    <citation type="journal article" date="2007" name="Proc. Natl. Acad. Sci. U.S.A.">
        <title>Analysis of phosphorylation sites on proteins from Saccharomyces cerevisiae by electron transfer dissociation (ETD) mass spectrometry.</title>
        <authorList>
            <person name="Chi A."/>
            <person name="Huttenhower C."/>
            <person name="Geer L.Y."/>
            <person name="Coon J.J."/>
            <person name="Syka J.E.P."/>
            <person name="Bai D.L."/>
            <person name="Shabanowitz J."/>
            <person name="Burke D.J."/>
            <person name="Troyanskaya O.G."/>
            <person name="Hunt D.F."/>
        </authorList>
    </citation>
    <scope>IDENTIFICATION BY MASS SPECTROMETRY [LARGE SCALE ANALYSIS]</scope>
</reference>
<reference key="11">
    <citation type="journal article" date="2008" name="Mol. Cell. Proteomics">
        <title>A multidimensional chromatography technology for in-depth phosphoproteome analysis.</title>
        <authorList>
            <person name="Albuquerque C.P."/>
            <person name="Smolka M.B."/>
            <person name="Payne S.H."/>
            <person name="Bafna V."/>
            <person name="Eng J."/>
            <person name="Zhou H."/>
        </authorList>
    </citation>
    <scope>PHOSPHORYLATION [LARGE SCALE ANALYSIS] AT SER-42</scope>
    <scope>IDENTIFICATION BY MASS SPECTROMETRY [LARGE SCALE ANALYSIS]</scope>
</reference>
<reference key="12">
    <citation type="journal article" date="2009" name="Science">
        <title>Global analysis of Cdk1 substrate phosphorylation sites provides insights into evolution.</title>
        <authorList>
            <person name="Holt L.J."/>
            <person name="Tuch B.B."/>
            <person name="Villen J."/>
            <person name="Johnson A.D."/>
            <person name="Gygi S.P."/>
            <person name="Morgan D.O."/>
        </authorList>
    </citation>
    <scope>PHOSPHORYLATION [LARGE SCALE ANALYSIS] AT SER-42</scope>
    <scope>IDENTIFICATION BY MASS SPECTROMETRY [LARGE SCALE ANALYSIS]</scope>
</reference>
<protein>
    <recommendedName>
        <fullName>6-phosphogluconolactonase-like protein 2</fullName>
    </recommendedName>
    <alternativeName>
        <fullName>Suppressor of LOS1</fullName>
    </alternativeName>
</protein>
<organism>
    <name type="scientific">Saccharomyces cerevisiae (strain ATCC 204508 / S288c)</name>
    <name type="common">Baker's yeast</name>
    <dbReference type="NCBI Taxonomy" id="559292"/>
    <lineage>
        <taxon>Eukaryota</taxon>
        <taxon>Fungi</taxon>
        <taxon>Dikarya</taxon>
        <taxon>Ascomycota</taxon>
        <taxon>Saccharomycotina</taxon>
        <taxon>Saccharomycetes</taxon>
        <taxon>Saccharomycetales</taxon>
        <taxon>Saccharomycetaceae</taxon>
        <taxon>Saccharomyces</taxon>
    </lineage>
</organism>
<keyword id="KW-0963">Cytoplasm</keyword>
<keyword id="KW-0597">Phosphoprotein</keyword>
<keyword id="KW-1185">Reference proteome</keyword>
<name>SOL2_YEAST</name>
<sequence>MTTTVPKIFAFHEFSDVAEAVADHVVHAQDGALAPKNERKHSVPNISMNALDMTREASCKSTASAAEGKSGSSGSGSGSSKPKKEKRFKIALSGGSLIEVLHEGLLKRDDVRWGDWDIYFADERLVPFSSNESNYGCAKRKILDLIDTAKYGTPKVYHIDESLIDDPQECADNYEKVLIRGFAGRDSVKLPMFDLFLLGCAPDGHIASLFPNFQDNLREKLAWVVPVENAPSGPSTRISLTIPVICHSHRVTFVVEGATKAPIIKTIMERPEKGLPSSIVNEGAAGRVSWFVDDDALTDVLVTKKKYKFHQGLSI</sequence>
<feature type="chain" id="PRO_0000090083" description="6-phosphogluconolactonase-like protein 2">
    <location>
        <begin position="1"/>
        <end position="315"/>
    </location>
</feature>
<feature type="region of interest" description="Disordered" evidence="2">
    <location>
        <begin position="59"/>
        <end position="85"/>
    </location>
</feature>
<feature type="compositionally biased region" description="Low complexity" evidence="2">
    <location>
        <begin position="60"/>
        <end position="70"/>
    </location>
</feature>
<feature type="modified residue" description="Phosphoserine" evidence="7 8 9">
    <location>
        <position position="42"/>
    </location>
</feature>
<feature type="modified residue" description="Phosphoserine" evidence="1">
    <location>
        <position position="64"/>
    </location>
</feature>
<proteinExistence type="evidence at protein level"/>
<dbReference type="EMBL" id="U46559">
    <property type="protein sequence ID" value="AAB49322.1"/>
    <property type="molecule type" value="Genomic_DNA"/>
</dbReference>
<dbReference type="EMBL" id="X59720">
    <property type="protein sequence ID" value="CAA42272.2"/>
    <property type="molecule type" value="Genomic_DNA"/>
</dbReference>
<dbReference type="EMBL" id="BK006937">
    <property type="protein sequence ID" value="DAA07545.1"/>
    <property type="molecule type" value="Genomic_DNA"/>
</dbReference>
<dbReference type="PIR" id="S53589">
    <property type="entry name" value="S53589"/>
</dbReference>
<dbReference type="RefSeq" id="NP_009999.2">
    <property type="nucleotide sequence ID" value="NM_001178815.1"/>
</dbReference>
<dbReference type="SMR" id="P37262"/>
<dbReference type="BioGRID" id="31049">
    <property type="interactions" value="91"/>
</dbReference>
<dbReference type="DIP" id="DIP-8183N"/>
<dbReference type="FunCoup" id="P37262">
    <property type="interactions" value="284"/>
</dbReference>
<dbReference type="IntAct" id="P37262">
    <property type="interactions" value="10"/>
</dbReference>
<dbReference type="MINT" id="P37262"/>
<dbReference type="STRING" id="4932.YCR073W-A"/>
<dbReference type="iPTMnet" id="P37262"/>
<dbReference type="PaxDb" id="4932-YCR073W-A"/>
<dbReference type="PeptideAtlas" id="P37262"/>
<dbReference type="EnsemblFungi" id="YCR073W-A_mRNA">
    <property type="protein sequence ID" value="YCR073W-A"/>
    <property type="gene ID" value="YCR073W-A"/>
</dbReference>
<dbReference type="GeneID" id="850437"/>
<dbReference type="KEGG" id="sce:YCR073W-A"/>
<dbReference type="AGR" id="SGD:S000000718"/>
<dbReference type="SGD" id="S000000718">
    <property type="gene designation" value="SOL2"/>
</dbReference>
<dbReference type="VEuPathDB" id="FungiDB:YCR073W-A"/>
<dbReference type="eggNOG" id="KOG3147">
    <property type="taxonomic scope" value="Eukaryota"/>
</dbReference>
<dbReference type="GeneTree" id="ENSGT00550000075110"/>
<dbReference type="HOGENOM" id="CLU_053947_0_1_1"/>
<dbReference type="InParanoid" id="P37262"/>
<dbReference type="OMA" id="IAMSQST"/>
<dbReference type="OrthoDB" id="432544at2759"/>
<dbReference type="BioCyc" id="YEAST:G3O-29399-MONOMER"/>
<dbReference type="BioGRID-ORCS" id="850437">
    <property type="hits" value="0 hits in 10 CRISPR screens"/>
</dbReference>
<dbReference type="PRO" id="PR:P37262"/>
<dbReference type="Proteomes" id="UP000002311">
    <property type="component" value="Chromosome III"/>
</dbReference>
<dbReference type="RNAct" id="P37262">
    <property type="molecule type" value="protein"/>
</dbReference>
<dbReference type="GO" id="GO:0005737">
    <property type="term" value="C:cytoplasm"/>
    <property type="evidence" value="ECO:0007005"/>
    <property type="project" value="SGD"/>
</dbReference>
<dbReference type="GO" id="GO:0005829">
    <property type="term" value="C:cytosol"/>
    <property type="evidence" value="ECO:0000314"/>
    <property type="project" value="SGD"/>
</dbReference>
<dbReference type="GO" id="GO:0017057">
    <property type="term" value="F:6-phosphogluconolactonase activity"/>
    <property type="evidence" value="ECO:0007669"/>
    <property type="project" value="InterPro"/>
</dbReference>
<dbReference type="GO" id="GO:0005975">
    <property type="term" value="P:carbohydrate metabolic process"/>
    <property type="evidence" value="ECO:0007669"/>
    <property type="project" value="InterPro"/>
</dbReference>
<dbReference type="GO" id="GO:0009051">
    <property type="term" value="P:pentose-phosphate shunt, oxidative branch"/>
    <property type="evidence" value="ECO:0000318"/>
    <property type="project" value="GO_Central"/>
</dbReference>
<dbReference type="GO" id="GO:0006409">
    <property type="term" value="P:tRNA export from nucleus"/>
    <property type="evidence" value="ECO:0000315"/>
    <property type="project" value="SGD"/>
</dbReference>
<dbReference type="CDD" id="cd01400">
    <property type="entry name" value="6PGL"/>
    <property type="match status" value="1"/>
</dbReference>
<dbReference type="FunFam" id="3.40.50.1360:FF:000017">
    <property type="entry name" value="6-phosphogluconolactonase-like protein"/>
    <property type="match status" value="1"/>
</dbReference>
<dbReference type="Gene3D" id="3.40.50.1360">
    <property type="match status" value="1"/>
</dbReference>
<dbReference type="InterPro" id="IPR005900">
    <property type="entry name" value="6-phosphogluconolactonase_DevB"/>
</dbReference>
<dbReference type="InterPro" id="IPR006148">
    <property type="entry name" value="Glc/Gal-6P_isomerase"/>
</dbReference>
<dbReference type="InterPro" id="IPR037171">
    <property type="entry name" value="NagB/RpiA_transferase-like"/>
</dbReference>
<dbReference type="InterPro" id="IPR039104">
    <property type="entry name" value="PGLS"/>
</dbReference>
<dbReference type="NCBIfam" id="TIGR01198">
    <property type="entry name" value="pgl"/>
    <property type="match status" value="1"/>
</dbReference>
<dbReference type="PANTHER" id="PTHR11054">
    <property type="entry name" value="6-PHOSPHOGLUCONOLACTONASE"/>
    <property type="match status" value="1"/>
</dbReference>
<dbReference type="PANTHER" id="PTHR11054:SF0">
    <property type="entry name" value="6-PHOSPHOGLUCONOLACTONASE"/>
    <property type="match status" value="1"/>
</dbReference>
<dbReference type="Pfam" id="PF01182">
    <property type="entry name" value="Glucosamine_iso"/>
    <property type="match status" value="1"/>
</dbReference>
<dbReference type="SUPFAM" id="SSF100950">
    <property type="entry name" value="NagB/RpiA/CoA transferase-like"/>
    <property type="match status" value="1"/>
</dbReference>
<evidence type="ECO:0000250" key="1">
    <source>
        <dbReference type="UniProtKB" id="P50278"/>
    </source>
</evidence>
<evidence type="ECO:0000256" key="2">
    <source>
        <dbReference type="SAM" id="MobiDB-lite"/>
    </source>
</evidence>
<evidence type="ECO:0000269" key="3">
    <source>
    </source>
</evidence>
<evidence type="ECO:0000269" key="4">
    <source>
    </source>
</evidence>
<evidence type="ECO:0000269" key="5">
    <source>
    </source>
</evidence>
<evidence type="ECO:0000305" key="6"/>
<evidence type="ECO:0007744" key="7">
    <source>
    </source>
</evidence>
<evidence type="ECO:0007744" key="8">
    <source>
    </source>
</evidence>
<evidence type="ECO:0007744" key="9">
    <source>
    </source>
</evidence>
<accession>P37262</accession>
<accession>D6VR76</accession>